<sequence>MRRLTDSFILGLAKGAVIPGLYPFRMTEGRSSLEQIGVVITVAISFLLTFKKFDPRFYKPIGDFKIVFLSLMAAKLPSFLSAVVMICLIFSEMRLRMILSRCVLIMPSYSPAVFTGMMVSLFFKSQMFDDYSVLTTTAFLLPFTLRYGWMIRSSGFLISLQKYRPILKSTSFREVDLKYLVKFTVEFLLLFTILWIGKIFLSMPKSNHLFFLTVVNNVFFKLNVFKAAACAMVAILSGLMMNVCLYRIIFEAFLGLGFSSIMLTLSSDLKDRSFYAGDLLNGFFCLVVCCMYFGV</sequence>
<evidence type="ECO:0000255" key="1"/>
<evidence type="ECO:0000305" key="2"/>
<proteinExistence type="predicted"/>
<feature type="chain" id="PRO_0000461151" description="Protein U26">
    <location>
        <begin position="1"/>
        <end position="295"/>
    </location>
</feature>
<feature type="transmembrane region" description="Helical" evidence="1">
    <location>
        <begin position="33"/>
        <end position="53"/>
    </location>
</feature>
<feature type="transmembrane region" description="Helical" evidence="1">
    <location>
        <begin position="66"/>
        <end position="86"/>
    </location>
</feature>
<feature type="transmembrane region" description="Helical" evidence="1">
    <location>
        <begin position="103"/>
        <end position="123"/>
    </location>
</feature>
<feature type="transmembrane region" description="Helical" evidence="1">
    <location>
        <begin position="131"/>
        <end position="151"/>
    </location>
</feature>
<feature type="transmembrane region" description="Helical" evidence="1">
    <location>
        <begin position="183"/>
        <end position="203"/>
    </location>
</feature>
<feature type="transmembrane region" description="Helical" evidence="1">
    <location>
        <begin position="218"/>
        <end position="238"/>
    </location>
</feature>
<feature type="transmembrane region" description="Helical" evidence="1">
    <location>
        <begin position="243"/>
        <end position="263"/>
    </location>
</feature>
<feature type="transmembrane region" description="Helical" evidence="1">
    <location>
        <begin position="274"/>
        <end position="294"/>
    </location>
</feature>
<gene>
    <name type="primary">U26</name>
</gene>
<dbReference type="EMBL" id="AB021506">
    <property type="protein sequence ID" value="BAA78247.1"/>
    <property type="molecule type" value="Genomic_DNA"/>
</dbReference>
<dbReference type="RefSeq" id="NP_050207.1">
    <property type="nucleotide sequence ID" value="NC_000898.1"/>
</dbReference>
<dbReference type="GeneID" id="1497028"/>
<dbReference type="KEGG" id="vg:1497028"/>
<dbReference type="Proteomes" id="UP000142685">
    <property type="component" value="Segment"/>
</dbReference>
<dbReference type="GO" id="GO:0033644">
    <property type="term" value="C:host cell membrane"/>
    <property type="evidence" value="ECO:0007669"/>
    <property type="project" value="UniProtKB-SubCell"/>
</dbReference>
<dbReference type="GO" id="GO:0016020">
    <property type="term" value="C:membrane"/>
    <property type="evidence" value="ECO:0007669"/>
    <property type="project" value="UniProtKB-KW"/>
</dbReference>
<dbReference type="InterPro" id="IPR009980">
    <property type="entry name" value="Herpes_U26"/>
</dbReference>
<dbReference type="Pfam" id="PF07402">
    <property type="entry name" value="Herpes_U26"/>
    <property type="match status" value="1"/>
</dbReference>
<reference key="1">
    <citation type="journal article" date="1999" name="J. Virol.">
        <title>Comparison of the complete DNA sequences of human herpesvirus 6 variants A and B.</title>
        <authorList>
            <person name="Isegawa Y."/>
            <person name="Mukai T."/>
            <person name="Nakano K."/>
            <person name="Kagawa M."/>
            <person name="Chen J."/>
            <person name="Mori Y."/>
            <person name="Sunagawa T."/>
            <person name="Kawanishi K."/>
            <person name="Sashihara J."/>
            <person name="Hata A."/>
            <person name="Zou P."/>
            <person name="Kosuge H."/>
            <person name="Yamanishi K."/>
        </authorList>
    </citation>
    <scope>NUCLEOTIDE SEQUENCE [LARGE SCALE GENOMIC DNA]</scope>
    <source>
        <strain>HST</strain>
    </source>
</reference>
<protein>
    <recommendedName>
        <fullName>Protein U26</fullName>
    </recommendedName>
</protein>
<name>VU26_HHV6H</name>
<accession>P0DXM6</accession>
<accession>Q77PV1</accession>
<accession>Q9WT38</accession>
<organismHost>
    <name type="scientific">Homo sapiens</name>
    <name type="common">Human</name>
    <dbReference type="NCBI Taxonomy" id="9606"/>
</organismHost>
<keyword id="KW-1043">Host membrane</keyword>
<keyword id="KW-0472">Membrane</keyword>
<keyword id="KW-0812">Transmembrane</keyword>
<keyword id="KW-1133">Transmembrane helix</keyword>
<organism>
    <name type="scientific">Human herpesvirus 6B</name>
    <name type="common">HHV-6 variant B</name>
    <name type="synonym">Human B lymphotropic virus</name>
    <dbReference type="NCBI Taxonomy" id="32604"/>
    <lineage>
        <taxon>Viruses</taxon>
        <taxon>Duplodnaviria</taxon>
        <taxon>Heunggongvirae</taxon>
        <taxon>Peploviricota</taxon>
        <taxon>Herviviricetes</taxon>
        <taxon>Herpesvirales</taxon>
        <taxon>Orthoherpesviridae</taxon>
        <taxon>Betaherpesvirinae</taxon>
        <taxon>Roseolovirus</taxon>
        <taxon>Roseolovirus humanbeta6b</taxon>
    </lineage>
</organism>
<comment type="subcellular location">
    <subcellularLocation>
        <location evidence="2">Host membrane</location>
        <topology evidence="2">Multi-pass membrane protein</topology>
    </subcellularLocation>
</comment>